<proteinExistence type="inferred from homology"/>
<keyword id="KW-0998">Cell outer membrane</keyword>
<keyword id="KW-0143">Chaperone</keyword>
<keyword id="KW-0449">Lipoprotein</keyword>
<keyword id="KW-0472">Membrane</keyword>
<keyword id="KW-0564">Palmitate</keyword>
<keyword id="KW-0653">Protein transport</keyword>
<keyword id="KW-1185">Reference proteome</keyword>
<keyword id="KW-0732">Signal</keyword>
<keyword id="KW-0813">Transport</keyword>
<name>LOLB_PASMU</name>
<organism>
    <name type="scientific">Pasteurella multocida (strain Pm70)</name>
    <dbReference type="NCBI Taxonomy" id="272843"/>
    <lineage>
        <taxon>Bacteria</taxon>
        <taxon>Pseudomonadati</taxon>
        <taxon>Pseudomonadota</taxon>
        <taxon>Gammaproteobacteria</taxon>
        <taxon>Pasteurellales</taxon>
        <taxon>Pasteurellaceae</taxon>
        <taxon>Pasteurella</taxon>
    </lineage>
</organism>
<protein>
    <recommendedName>
        <fullName>Outer-membrane lipoprotein LolB</fullName>
    </recommendedName>
</protein>
<sequence>MVMKKQHFLLPIIASFFLFACTLDTERPTDVKYISHTDPTWQQHLSQLKKIRDYTNQGQLGYISQKERFSTRFDWQYQNPTNYRLTLSSTLSPTTLSIEVRHNVMHLSDNKGPLRSAQDAKRLLKEIVGMDLPLDQFALWLKGQPDESREYRVAENHLLAHFSYPIDNQQWTADYLSYHQLPLPLPKDILLKTEGQTLKIRIDNWTY</sequence>
<comment type="function">
    <text evidence="1">Plays a critical role in the incorporation of lipoproteins in the outer membrane after they are released by the LolA protein.</text>
</comment>
<comment type="subunit">
    <text evidence="1">Monomer.</text>
</comment>
<comment type="subcellular location">
    <subcellularLocation>
        <location evidence="1">Cell outer membrane</location>
        <topology evidence="1">Lipid-anchor</topology>
    </subcellularLocation>
</comment>
<comment type="similarity">
    <text evidence="3">Belongs to the LolB family.</text>
</comment>
<accession>P57834</accession>
<reference key="1">
    <citation type="journal article" date="2001" name="Proc. Natl. Acad. Sci. U.S.A.">
        <title>Complete genomic sequence of Pasteurella multocida Pm70.</title>
        <authorList>
            <person name="May B.J."/>
            <person name="Zhang Q."/>
            <person name="Li L.L."/>
            <person name="Paustian M.L."/>
            <person name="Whittam T.S."/>
            <person name="Kapur V."/>
        </authorList>
    </citation>
    <scope>NUCLEOTIDE SEQUENCE [LARGE SCALE GENOMIC DNA]</scope>
    <source>
        <strain>Pm70</strain>
    </source>
</reference>
<feature type="signal peptide" evidence="2">
    <location>
        <begin position="1"/>
        <end position="20"/>
    </location>
</feature>
<feature type="chain" id="PRO_0000018304" description="Outer-membrane lipoprotein LolB">
    <location>
        <begin position="21"/>
        <end position="207"/>
    </location>
</feature>
<feature type="lipid moiety-binding region" description="N-palmitoyl cysteine" evidence="2">
    <location>
        <position position="21"/>
    </location>
</feature>
<feature type="lipid moiety-binding region" description="S-diacylglycerol cysteine" evidence="2">
    <location>
        <position position="21"/>
    </location>
</feature>
<dbReference type="EMBL" id="AE004439">
    <property type="protein sequence ID" value="AAK02330.1"/>
    <property type="molecule type" value="Genomic_DNA"/>
</dbReference>
<dbReference type="SMR" id="P57834"/>
<dbReference type="STRING" id="272843.PM0246"/>
<dbReference type="EnsemblBacteria" id="AAK02330">
    <property type="protein sequence ID" value="AAK02330"/>
    <property type="gene ID" value="PM0246"/>
</dbReference>
<dbReference type="KEGG" id="pmu:PM0246"/>
<dbReference type="HOGENOM" id="CLU_092816_1_1_6"/>
<dbReference type="Proteomes" id="UP000000809">
    <property type="component" value="Chromosome"/>
</dbReference>
<dbReference type="GO" id="GO:0009279">
    <property type="term" value="C:cell outer membrane"/>
    <property type="evidence" value="ECO:0007669"/>
    <property type="project" value="UniProtKB-SubCell"/>
</dbReference>
<dbReference type="GO" id="GO:0044874">
    <property type="term" value="P:lipoprotein localization to outer membrane"/>
    <property type="evidence" value="ECO:0007669"/>
    <property type="project" value="UniProtKB-UniRule"/>
</dbReference>
<dbReference type="GO" id="GO:0015031">
    <property type="term" value="P:protein transport"/>
    <property type="evidence" value="ECO:0007669"/>
    <property type="project" value="UniProtKB-KW"/>
</dbReference>
<dbReference type="CDD" id="cd16326">
    <property type="entry name" value="LolB"/>
    <property type="match status" value="1"/>
</dbReference>
<dbReference type="Gene3D" id="2.50.20.10">
    <property type="entry name" value="Lipoprotein localisation LolA/LolB/LppX"/>
    <property type="match status" value="1"/>
</dbReference>
<dbReference type="HAMAP" id="MF_00233">
    <property type="entry name" value="LolB"/>
    <property type="match status" value="1"/>
</dbReference>
<dbReference type="InterPro" id="IPR029046">
    <property type="entry name" value="LolA/LolB/LppX"/>
</dbReference>
<dbReference type="InterPro" id="IPR004565">
    <property type="entry name" value="OM_lipoprot_LolB"/>
</dbReference>
<dbReference type="NCBIfam" id="TIGR00548">
    <property type="entry name" value="lolB"/>
    <property type="match status" value="1"/>
</dbReference>
<dbReference type="Pfam" id="PF03550">
    <property type="entry name" value="LolB"/>
    <property type="match status" value="1"/>
</dbReference>
<dbReference type="SUPFAM" id="SSF89392">
    <property type="entry name" value="Prokaryotic lipoproteins and lipoprotein localization factors"/>
    <property type="match status" value="1"/>
</dbReference>
<dbReference type="PROSITE" id="PS51257">
    <property type="entry name" value="PROKAR_LIPOPROTEIN"/>
    <property type="match status" value="1"/>
</dbReference>
<evidence type="ECO:0000250" key="1"/>
<evidence type="ECO:0000255" key="2"/>
<evidence type="ECO:0000305" key="3"/>
<gene>
    <name type="primary">lolB</name>
    <name type="ordered locus">PM0246</name>
</gene>